<name>RL10E_HALS3</name>
<evidence type="ECO:0000255" key="1">
    <source>
        <dbReference type="HAMAP-Rule" id="MF_00448"/>
    </source>
</evidence>
<evidence type="ECO:0000305" key="2"/>
<reference key="1">
    <citation type="journal article" date="2008" name="Genomics">
        <title>Evolution in the laboratory: the genome of Halobacterium salinarum strain R1 compared to that of strain NRC-1.</title>
        <authorList>
            <person name="Pfeiffer F."/>
            <person name="Schuster S.C."/>
            <person name="Broicher A."/>
            <person name="Falb M."/>
            <person name="Palm P."/>
            <person name="Rodewald K."/>
            <person name="Ruepp A."/>
            <person name="Soppa J."/>
            <person name="Tittor J."/>
            <person name="Oesterhelt D."/>
        </authorList>
    </citation>
    <scope>NUCLEOTIDE SEQUENCE [LARGE SCALE GENOMIC DNA]</scope>
    <source>
        <strain>ATCC 29341 / DSM 671 / R1</strain>
    </source>
</reference>
<sequence>MSEKPASMYRKIDKPSYTRRDYVTGIPGSKIAQHKMGDLQADADDYPVQISLVPQEECQLRHGSLEAARLSANRHLIKELGEGNYKMQLRKFPHQIIRENKQATGAGADRVSDGMRQAFGVPVGTAARIQPGDQLFTAYCEVEQAAAVKEAFRRAYNKITPPCKINVERGETLLVR</sequence>
<organism>
    <name type="scientific">Halobacterium salinarum (strain ATCC 29341 / DSM 671 / R1)</name>
    <dbReference type="NCBI Taxonomy" id="478009"/>
    <lineage>
        <taxon>Archaea</taxon>
        <taxon>Methanobacteriati</taxon>
        <taxon>Methanobacteriota</taxon>
        <taxon>Stenosarchaea group</taxon>
        <taxon>Halobacteria</taxon>
        <taxon>Halobacteriales</taxon>
        <taxon>Halobacteriaceae</taxon>
        <taxon>Halobacterium</taxon>
        <taxon>Halobacterium salinarum NRC-34001</taxon>
    </lineage>
</organism>
<proteinExistence type="inferred from homology"/>
<protein>
    <recommendedName>
        <fullName evidence="1">Large ribosomal subunit protein uL16</fullName>
    </recommendedName>
    <alternativeName>
        <fullName evidence="2">50S ribosomal protein L10e</fullName>
    </alternativeName>
</protein>
<keyword id="KW-0687">Ribonucleoprotein</keyword>
<keyword id="KW-0689">Ribosomal protein</keyword>
<gene>
    <name evidence="1" type="primary">rpl10e</name>
    <name type="ordered locus">OE_1160R</name>
</gene>
<accession>B0R2M5</accession>
<comment type="similarity">
    <text evidence="1">Belongs to the universal ribosomal protein uL16 family.</text>
</comment>
<dbReference type="EMBL" id="AM774415">
    <property type="protein sequence ID" value="CAP12979.1"/>
    <property type="molecule type" value="Genomic_DNA"/>
</dbReference>
<dbReference type="RefSeq" id="WP_010902023.1">
    <property type="nucleotide sequence ID" value="NC_010364.1"/>
</dbReference>
<dbReference type="SMR" id="B0R2M5"/>
<dbReference type="EnsemblBacteria" id="CAP12979">
    <property type="protein sequence ID" value="CAP12979"/>
    <property type="gene ID" value="OE_1160R"/>
</dbReference>
<dbReference type="KEGG" id="hsl:OE_1160R"/>
<dbReference type="HOGENOM" id="CLU_084051_0_2_2"/>
<dbReference type="PhylomeDB" id="B0R2M5"/>
<dbReference type="Proteomes" id="UP000001321">
    <property type="component" value="Chromosome"/>
</dbReference>
<dbReference type="GO" id="GO:1990904">
    <property type="term" value="C:ribonucleoprotein complex"/>
    <property type="evidence" value="ECO:0007669"/>
    <property type="project" value="UniProtKB-KW"/>
</dbReference>
<dbReference type="GO" id="GO:0005840">
    <property type="term" value="C:ribosome"/>
    <property type="evidence" value="ECO:0007669"/>
    <property type="project" value="UniProtKB-KW"/>
</dbReference>
<dbReference type="GO" id="GO:0003735">
    <property type="term" value="F:structural constituent of ribosome"/>
    <property type="evidence" value="ECO:0007669"/>
    <property type="project" value="InterPro"/>
</dbReference>
<dbReference type="GO" id="GO:0006412">
    <property type="term" value="P:translation"/>
    <property type="evidence" value="ECO:0007669"/>
    <property type="project" value="UniProtKB-UniRule"/>
</dbReference>
<dbReference type="FunFam" id="3.90.1170.10:FF:000008">
    <property type="entry name" value="50S ribosomal protein L10e"/>
    <property type="match status" value="1"/>
</dbReference>
<dbReference type="Gene3D" id="3.90.1170.10">
    <property type="entry name" value="Ribosomal protein L10e/L16"/>
    <property type="match status" value="1"/>
</dbReference>
<dbReference type="HAMAP" id="MF_00448">
    <property type="entry name" value="Ribosomal_uL16_arch"/>
    <property type="match status" value="1"/>
</dbReference>
<dbReference type="InterPro" id="IPR047873">
    <property type="entry name" value="Ribosomal_uL16"/>
</dbReference>
<dbReference type="InterPro" id="IPR022981">
    <property type="entry name" value="Ribosomal_uL16_arc"/>
</dbReference>
<dbReference type="InterPro" id="IPR018255">
    <property type="entry name" value="Ribosomal_uL16_CS_euk_arc"/>
</dbReference>
<dbReference type="InterPro" id="IPR001197">
    <property type="entry name" value="Ribosomal_uL16_euk_arch"/>
</dbReference>
<dbReference type="InterPro" id="IPR036920">
    <property type="entry name" value="Ribosomal_uL16_sf"/>
</dbReference>
<dbReference type="NCBIfam" id="NF003239">
    <property type="entry name" value="PRK04199.1-4"/>
    <property type="match status" value="1"/>
</dbReference>
<dbReference type="NCBIfam" id="NF003241">
    <property type="entry name" value="PRK04199.1-6"/>
    <property type="match status" value="1"/>
</dbReference>
<dbReference type="PANTHER" id="PTHR11726">
    <property type="entry name" value="60S RIBOSOMAL PROTEIN L10"/>
    <property type="match status" value="1"/>
</dbReference>
<dbReference type="Pfam" id="PF00252">
    <property type="entry name" value="Ribosomal_L16"/>
    <property type="match status" value="1"/>
</dbReference>
<dbReference type="PIRSF" id="PIRSF005590">
    <property type="entry name" value="Ribosomal_L10"/>
    <property type="match status" value="1"/>
</dbReference>
<dbReference type="SUPFAM" id="SSF54686">
    <property type="entry name" value="Ribosomal protein L16p/L10e"/>
    <property type="match status" value="1"/>
</dbReference>
<dbReference type="PROSITE" id="PS01257">
    <property type="entry name" value="RIBOSOMAL_L10E"/>
    <property type="match status" value="1"/>
</dbReference>
<feature type="chain" id="PRO_1000193766" description="Large ribosomal subunit protein uL16">
    <location>
        <begin position="1"/>
        <end position="176"/>
    </location>
</feature>